<accession>Q6PL11</accession>
<accession>Q2R4Y1</accession>
<reference key="1">
    <citation type="submission" date="2004-04" db="EMBL/GenBank/DDBJ databases">
        <title>Oryza sativa skp1 ortholog genes.</title>
        <authorList>
            <person name="Zhao J."/>
            <person name="Zhang X."/>
        </authorList>
    </citation>
    <scope>NUCLEOTIDE SEQUENCE [MRNA]</scope>
</reference>
<reference key="2">
    <citation type="journal article" date="2005" name="BMC Biol.">
        <title>The sequence of rice chromosomes 11 and 12, rich in disease resistance genes and recent gene duplications.</title>
        <authorList>
            <consortium name="The rice chromosomes 11 and 12 sequencing consortia"/>
        </authorList>
    </citation>
    <scope>NUCLEOTIDE SEQUENCE [LARGE SCALE GENOMIC DNA]</scope>
    <source>
        <strain>cv. Nipponbare</strain>
    </source>
</reference>
<reference key="3">
    <citation type="journal article" date="2005" name="Nature">
        <title>The map-based sequence of the rice genome.</title>
        <authorList>
            <consortium name="International rice genome sequencing project (IRGSP)"/>
        </authorList>
    </citation>
    <scope>NUCLEOTIDE SEQUENCE [LARGE SCALE GENOMIC DNA]</scope>
    <source>
        <strain>cv. Nipponbare</strain>
    </source>
</reference>
<reference key="4">
    <citation type="journal article" date="2008" name="Nucleic Acids Res.">
        <title>The rice annotation project database (RAP-DB): 2008 update.</title>
        <authorList>
            <consortium name="The rice annotation project (RAP)"/>
        </authorList>
    </citation>
    <scope>GENOME REANNOTATION</scope>
    <source>
        <strain>cv. Nipponbare</strain>
    </source>
</reference>
<reference key="5">
    <citation type="journal article" date="2013" name="Rice">
        <title>Improvement of the Oryza sativa Nipponbare reference genome using next generation sequence and optical map data.</title>
        <authorList>
            <person name="Kawahara Y."/>
            <person name="de la Bastide M."/>
            <person name="Hamilton J.P."/>
            <person name="Kanamori H."/>
            <person name="McCombie W.R."/>
            <person name="Ouyang S."/>
            <person name="Schwartz D.C."/>
            <person name="Tanaka T."/>
            <person name="Wu J."/>
            <person name="Zhou S."/>
            <person name="Childs K.L."/>
            <person name="Davidson R.M."/>
            <person name="Lin H."/>
            <person name="Quesada-Ocampo L."/>
            <person name="Vaillancourt B."/>
            <person name="Sakai H."/>
            <person name="Lee S.S."/>
            <person name="Kim J."/>
            <person name="Numa H."/>
            <person name="Itoh T."/>
            <person name="Buell C.R."/>
            <person name="Matsumoto T."/>
        </authorList>
    </citation>
    <scope>GENOME REANNOTATION</scope>
    <source>
        <strain>cv. Nipponbare</strain>
    </source>
</reference>
<reference key="6">
    <citation type="journal article" date="2005" name="PLoS Biol.">
        <title>The genomes of Oryza sativa: a history of duplications.</title>
        <authorList>
            <person name="Yu J."/>
            <person name="Wang J."/>
            <person name="Lin W."/>
            <person name="Li S."/>
            <person name="Li H."/>
            <person name="Zhou J."/>
            <person name="Ni P."/>
            <person name="Dong W."/>
            <person name="Hu S."/>
            <person name="Zeng C."/>
            <person name="Zhang J."/>
            <person name="Zhang Y."/>
            <person name="Li R."/>
            <person name="Xu Z."/>
            <person name="Li S."/>
            <person name="Li X."/>
            <person name="Zheng H."/>
            <person name="Cong L."/>
            <person name="Lin L."/>
            <person name="Yin J."/>
            <person name="Geng J."/>
            <person name="Li G."/>
            <person name="Shi J."/>
            <person name="Liu J."/>
            <person name="Lv H."/>
            <person name="Li J."/>
            <person name="Wang J."/>
            <person name="Deng Y."/>
            <person name="Ran L."/>
            <person name="Shi X."/>
            <person name="Wang X."/>
            <person name="Wu Q."/>
            <person name="Li C."/>
            <person name="Ren X."/>
            <person name="Wang J."/>
            <person name="Wang X."/>
            <person name="Li D."/>
            <person name="Liu D."/>
            <person name="Zhang X."/>
            <person name="Ji Z."/>
            <person name="Zhao W."/>
            <person name="Sun Y."/>
            <person name="Zhang Z."/>
            <person name="Bao J."/>
            <person name="Han Y."/>
            <person name="Dong L."/>
            <person name="Ji J."/>
            <person name="Chen P."/>
            <person name="Wu S."/>
            <person name="Liu J."/>
            <person name="Xiao Y."/>
            <person name="Bu D."/>
            <person name="Tan J."/>
            <person name="Yang L."/>
            <person name="Ye C."/>
            <person name="Zhang J."/>
            <person name="Xu J."/>
            <person name="Zhou Y."/>
            <person name="Yu Y."/>
            <person name="Zhang B."/>
            <person name="Zhuang S."/>
            <person name="Wei H."/>
            <person name="Liu B."/>
            <person name="Lei M."/>
            <person name="Yu H."/>
            <person name="Li Y."/>
            <person name="Xu H."/>
            <person name="Wei S."/>
            <person name="He X."/>
            <person name="Fang L."/>
            <person name="Zhang Z."/>
            <person name="Zhang Y."/>
            <person name="Huang X."/>
            <person name="Su Z."/>
            <person name="Tong W."/>
            <person name="Li J."/>
            <person name="Tong Z."/>
            <person name="Li S."/>
            <person name="Ye J."/>
            <person name="Wang L."/>
            <person name="Fang L."/>
            <person name="Lei T."/>
            <person name="Chen C.-S."/>
            <person name="Chen H.-C."/>
            <person name="Xu Z."/>
            <person name="Li H."/>
            <person name="Huang H."/>
            <person name="Zhang F."/>
            <person name="Xu H."/>
            <person name="Li N."/>
            <person name="Zhao C."/>
            <person name="Li S."/>
            <person name="Dong L."/>
            <person name="Huang Y."/>
            <person name="Li L."/>
            <person name="Xi Y."/>
            <person name="Qi Q."/>
            <person name="Li W."/>
            <person name="Zhang B."/>
            <person name="Hu W."/>
            <person name="Zhang Y."/>
            <person name="Tian X."/>
            <person name="Jiao Y."/>
            <person name="Liang X."/>
            <person name="Jin J."/>
            <person name="Gao L."/>
            <person name="Zheng W."/>
            <person name="Hao B."/>
            <person name="Liu S.-M."/>
            <person name="Wang W."/>
            <person name="Yuan L."/>
            <person name="Cao M."/>
            <person name="McDermott J."/>
            <person name="Samudrala R."/>
            <person name="Wang J."/>
            <person name="Wong G.K.-S."/>
            <person name="Yang H."/>
        </authorList>
    </citation>
    <scope>NUCLEOTIDE SEQUENCE [LARGE SCALE GENOMIC DNA]</scope>
    <source>
        <strain>cv. Nipponbare</strain>
    </source>
</reference>
<reference key="7">
    <citation type="journal article" date="2013" name="Virol. J.">
        <title>Nonstructural protein P7-2 encoded by Rice black-streaked dwarf virus interacts with SKP1, a core subunit of SCF ubiquitin ligase.</title>
        <authorList>
            <person name="Wang Q."/>
            <person name="Tao T."/>
            <person name="Han Y."/>
            <person name="Chen X."/>
            <person name="Fan Z."/>
            <person name="Li D."/>
            <person name="Yu J."/>
            <person name="Han C."/>
        </authorList>
    </citation>
    <scope>INTERACTION WITH VIRUS P7-2 PROTEIN</scope>
</reference>
<reference key="8">
    <citation type="journal article" date="2014" name="Plant Cell Physiol.">
        <title>DWARF3 participates in an SCF complex and associates with DWARF14 to suppress rice shoot branching.</title>
        <authorList>
            <person name="Zhao J."/>
            <person name="Wang T."/>
            <person name="Wang M."/>
            <person name="Liu Y."/>
            <person name="Yuan S."/>
            <person name="Gao Y."/>
            <person name="Yin L."/>
            <person name="Sun W."/>
            <person name="Peng L."/>
            <person name="Zhang W."/>
            <person name="Wan J."/>
            <person name="Li X."/>
        </authorList>
    </citation>
    <scope>INTERACTION WITH D3</scope>
</reference>
<reference key="9">
    <citation type="journal article" date="2016" name="Plant Cell">
        <title>MEIOTIC F-BOX is essential for male meiotic DNA double-strand break repair in rice.</title>
        <authorList>
            <person name="He Y."/>
            <person name="Wang C."/>
            <person name="Higgins J.D."/>
            <person name="Yu J."/>
            <person name="Zong J."/>
            <person name="Lu P."/>
            <person name="Zhang D."/>
            <person name="Liang W."/>
        </authorList>
    </citation>
    <scope>INTERACTION WITH MOF</scope>
    <scope>SUBCELLULAR LOCATION</scope>
    <scope>DEVELOPMENTAL STAGE</scope>
</reference>
<reference key="10">
    <citation type="journal article" date="2017" name="PLoS ONE">
        <title>Rice black streaked dwarf virus P7-2 forms a SCF complex through binding to Oryza sativa SKP1-like proteins, and interacts with GID2 involved in the gibberellin pathway.</title>
        <authorList>
            <person name="Tao T."/>
            <person name="Zhou C.J."/>
            <person name="Wang Q."/>
            <person name="Chen X.R."/>
            <person name="Sun Q."/>
            <person name="Zhao T.Y."/>
            <person name="Ye J.C."/>
            <person name="Wang Y."/>
            <person name="Zhang Z.Y."/>
            <person name="Zhang Y.L."/>
            <person name="Guo Z.J."/>
            <person name="Wang X.B."/>
            <person name="Li D.W."/>
            <person name="Yu J.L."/>
            <person name="Han C.G."/>
        </authorList>
    </citation>
    <scope>INTERACTION WITH VIRUS P7-2 PROTEIN</scope>
    <scope>IDENTIFICATION IN THE SCF COMPLEX</scope>
</reference>
<name>SKP1_ORYSJ</name>
<keyword id="KW-0945">Host-virus interaction</keyword>
<keyword id="KW-0539">Nucleus</keyword>
<keyword id="KW-1185">Reference proteome</keyword>
<keyword id="KW-0833">Ubl conjugation pathway</keyword>
<sequence>MAAEGEKKMITLKSSDGEEFEVEEAVAMESQTIRHMIEDDCADNGIPLPNVNSKILSKVIEYCNKHVHAAAAAASKAADDAASAAAAVPPPSGEDLKNWDADFVKVDQATLFDLILAANYLNIKGLLDLTCQTVADMIKGKTPEEIRKTFNIKNDFTPEEEEEIRRENQWAFE</sequence>
<organism>
    <name type="scientific">Oryza sativa subsp. japonica</name>
    <name type="common">Rice</name>
    <dbReference type="NCBI Taxonomy" id="39947"/>
    <lineage>
        <taxon>Eukaryota</taxon>
        <taxon>Viridiplantae</taxon>
        <taxon>Streptophyta</taxon>
        <taxon>Embryophyta</taxon>
        <taxon>Tracheophyta</taxon>
        <taxon>Spermatophyta</taxon>
        <taxon>Magnoliopsida</taxon>
        <taxon>Liliopsida</taxon>
        <taxon>Poales</taxon>
        <taxon>Poaceae</taxon>
        <taxon>BOP clade</taxon>
        <taxon>Oryzoideae</taxon>
        <taxon>Oryzeae</taxon>
        <taxon>Oryzinae</taxon>
        <taxon>Oryza</taxon>
        <taxon>Oryza sativa</taxon>
    </lineage>
</organism>
<protein>
    <recommendedName>
        <fullName evidence="7">SKP1-like protein 1</fullName>
    </recommendedName>
    <alternativeName>
        <fullName evidence="8">SKP1-like 1</fullName>
    </alternativeName>
</protein>
<feature type="chain" id="PRO_0000442778" description="SKP1-like protein 1">
    <location>
        <begin position="1"/>
        <end position="173"/>
    </location>
</feature>
<feature type="region of interest" description="Interaction with the F-box domain of F-box proteins" evidence="1">
    <location>
        <begin position="115"/>
        <end position="173"/>
    </location>
</feature>
<feature type="sequence conflict" description="In Ref. 2; ABA93508 and 3; BAH95253." evidence="8" ref="2 3">
    <original>A</original>
    <variation>P</variation>
    <location>
        <position position="25"/>
    </location>
</feature>
<evidence type="ECO:0000250" key="1">
    <source>
        <dbReference type="UniProtKB" id="Q39255"/>
    </source>
</evidence>
<evidence type="ECO:0000250" key="2">
    <source>
        <dbReference type="UniProtKB" id="Q9FHW7"/>
    </source>
</evidence>
<evidence type="ECO:0000269" key="3">
    <source>
    </source>
</evidence>
<evidence type="ECO:0000269" key="4">
    <source>
    </source>
</evidence>
<evidence type="ECO:0000269" key="5">
    <source>
    </source>
</evidence>
<evidence type="ECO:0000269" key="6">
    <source>
    </source>
</evidence>
<evidence type="ECO:0000303" key="7">
    <source>
    </source>
</evidence>
<evidence type="ECO:0000305" key="8"/>
<evidence type="ECO:0000312" key="9">
    <source>
        <dbReference type="EMBL" id="ABA93508.1"/>
    </source>
</evidence>
<evidence type="ECO:0000312" key="10">
    <source>
        <dbReference type="EMBL" id="BAT13929.1"/>
    </source>
</evidence>
<evidence type="ECO:0000312" key="11">
    <source>
        <dbReference type="EMBL" id="EAZ18273.1"/>
    </source>
</evidence>
<comment type="function">
    <text evidence="2">Involved in ubiquitination and subsequent proteasomal degradation of target proteins. Together with CUL1, a RING-box and a F-box protein, it forms a SCF E3 ubiquitin ligase complex. The functional specificity of this complex depends on the type of F-box protein. In the SCF complex, it serves as an adapter that links the F-box protein to CUL1.</text>
</comment>
<comment type="pathway">
    <text evidence="2">Protein modification; protein ubiquitination.</text>
</comment>
<comment type="subunit">
    <text evidence="3 4 5 6">Part of a SCF (SKP1-CUL1-F-box protein) E3 ubiquitin-protein ligase complex (PubMed:28494021). Interacts directly with MOF (via F-box domain) (PubMed:27436711). Interacts with rice black streaked dwarf virus RBSDV protein P7-2 (PubMed:24176102, PubMed:28494021). Is able to form the SCF complex together with CUL1 and the viral P7-2 protein (PubMed:28494021). Interacts with D3 (PubMed:24616269).</text>
</comment>
<comment type="subcellular location">
    <subcellularLocation>
        <location evidence="5">Nucleus</location>
    </subcellularLocation>
</comment>
<comment type="developmental stage">
    <text evidence="5">Highly expressed during early anther development.</text>
</comment>
<comment type="similarity">
    <text evidence="8">Belongs to the SKP1 family.</text>
</comment>
<gene>
    <name evidence="8" type="primary">SKP1</name>
    <name evidence="7" type="synonym">OSK1</name>
    <name evidence="10" type="ordered locus">Os11g0456300</name>
    <name evidence="9" type="ordered locus">LOC_Os11g26910</name>
    <name evidence="11" type="ORF">OsJ_33809</name>
</gene>
<dbReference type="EMBL" id="AY598357">
    <property type="protein sequence ID" value="AAT09201.1"/>
    <property type="molecule type" value="mRNA"/>
</dbReference>
<dbReference type="EMBL" id="DP000010">
    <property type="protein sequence ID" value="ABA93508.1"/>
    <property type="molecule type" value="Genomic_DNA"/>
</dbReference>
<dbReference type="EMBL" id="AP008217">
    <property type="protein sequence ID" value="BAH95253.1"/>
    <property type="molecule type" value="Genomic_DNA"/>
</dbReference>
<dbReference type="EMBL" id="AP014967">
    <property type="protein sequence ID" value="BAT13929.1"/>
    <property type="molecule type" value="Genomic_DNA"/>
</dbReference>
<dbReference type="EMBL" id="CM000148">
    <property type="protein sequence ID" value="EAZ18273.1"/>
    <property type="molecule type" value="Genomic_DNA"/>
</dbReference>
<dbReference type="RefSeq" id="XP_015617535.1">
    <property type="nucleotide sequence ID" value="XM_015762049.1"/>
</dbReference>
<dbReference type="SMR" id="Q6PL11"/>
<dbReference type="FunCoup" id="Q6PL11">
    <property type="interactions" value="3077"/>
</dbReference>
<dbReference type="STRING" id="39947.Q6PL11"/>
<dbReference type="PaxDb" id="39947-Q6PL11"/>
<dbReference type="EnsemblPlants" id="Os11t0456300-01">
    <property type="protein sequence ID" value="Os11t0456300-01"/>
    <property type="gene ID" value="Os11g0456300"/>
</dbReference>
<dbReference type="Gramene" id="Os11t0456300-01">
    <property type="protein sequence ID" value="Os11t0456300-01"/>
    <property type="gene ID" value="Os11g0456300"/>
</dbReference>
<dbReference type="KEGG" id="dosa:Os11g0456300"/>
<dbReference type="eggNOG" id="KOG1724">
    <property type="taxonomic scope" value="Eukaryota"/>
</dbReference>
<dbReference type="HOGENOM" id="CLU_059252_6_1_1"/>
<dbReference type="InParanoid" id="Q6PL11"/>
<dbReference type="OMA" id="DKYTASM"/>
<dbReference type="OrthoDB" id="1903179at2759"/>
<dbReference type="UniPathway" id="UPA00143"/>
<dbReference type="Proteomes" id="UP000000763">
    <property type="component" value="Chromosome 11"/>
</dbReference>
<dbReference type="Proteomes" id="UP000007752">
    <property type="component" value="Chromosome 11"/>
</dbReference>
<dbReference type="Proteomes" id="UP000059680">
    <property type="component" value="Chromosome 11"/>
</dbReference>
<dbReference type="ExpressionAtlas" id="Q6PL11">
    <property type="expression patterns" value="baseline and differential"/>
</dbReference>
<dbReference type="GO" id="GO:0005737">
    <property type="term" value="C:cytoplasm"/>
    <property type="evidence" value="ECO:0000318"/>
    <property type="project" value="GO_Central"/>
</dbReference>
<dbReference type="GO" id="GO:0005634">
    <property type="term" value="C:nucleus"/>
    <property type="evidence" value="ECO:0000318"/>
    <property type="project" value="GO_Central"/>
</dbReference>
<dbReference type="GO" id="GO:0097602">
    <property type="term" value="F:cullin family protein binding"/>
    <property type="evidence" value="ECO:0000318"/>
    <property type="project" value="GO_Central"/>
</dbReference>
<dbReference type="GO" id="GO:0009867">
    <property type="term" value="P:jasmonic acid mediated signaling pathway"/>
    <property type="evidence" value="ECO:0007669"/>
    <property type="project" value="UniProtKB-ARBA"/>
</dbReference>
<dbReference type="GO" id="GO:0016567">
    <property type="term" value="P:protein ubiquitination"/>
    <property type="evidence" value="ECO:0007669"/>
    <property type="project" value="UniProtKB-UniPathway"/>
</dbReference>
<dbReference type="GO" id="GO:0031146">
    <property type="term" value="P:SCF-dependent proteasomal ubiquitin-dependent protein catabolic process"/>
    <property type="evidence" value="ECO:0000318"/>
    <property type="project" value="GO_Central"/>
</dbReference>
<dbReference type="CDD" id="cd18322">
    <property type="entry name" value="BTB_POZ_SKP1"/>
    <property type="match status" value="1"/>
</dbReference>
<dbReference type="FunFam" id="3.30.710.10:FF:000057">
    <property type="entry name" value="SKP1-like protein 1A"/>
    <property type="match status" value="1"/>
</dbReference>
<dbReference type="Gene3D" id="3.30.710.10">
    <property type="entry name" value="Potassium Channel Kv1.1, Chain A"/>
    <property type="match status" value="1"/>
</dbReference>
<dbReference type="InterPro" id="IPR016897">
    <property type="entry name" value="SKP1"/>
</dbReference>
<dbReference type="InterPro" id="IPR001232">
    <property type="entry name" value="SKP1-like"/>
</dbReference>
<dbReference type="InterPro" id="IPR036296">
    <property type="entry name" value="SKP1-like_dim_sf"/>
</dbReference>
<dbReference type="InterPro" id="IPR011333">
    <property type="entry name" value="SKP1/BTB/POZ_sf"/>
</dbReference>
<dbReference type="InterPro" id="IPR016072">
    <property type="entry name" value="Skp1_comp_dimer"/>
</dbReference>
<dbReference type="InterPro" id="IPR016073">
    <property type="entry name" value="Skp1_comp_POZ"/>
</dbReference>
<dbReference type="PANTHER" id="PTHR11165">
    <property type="entry name" value="SKP1"/>
    <property type="match status" value="1"/>
</dbReference>
<dbReference type="Pfam" id="PF01466">
    <property type="entry name" value="Skp1"/>
    <property type="match status" value="1"/>
</dbReference>
<dbReference type="Pfam" id="PF03931">
    <property type="entry name" value="Skp1_POZ"/>
    <property type="match status" value="1"/>
</dbReference>
<dbReference type="PIRSF" id="PIRSF028729">
    <property type="entry name" value="E3_ubiquit_lig_SCF_Skp"/>
    <property type="match status" value="1"/>
</dbReference>
<dbReference type="SMART" id="SM00512">
    <property type="entry name" value="Skp1"/>
    <property type="match status" value="1"/>
</dbReference>
<dbReference type="SUPFAM" id="SSF54695">
    <property type="entry name" value="POZ domain"/>
    <property type="match status" value="1"/>
</dbReference>
<dbReference type="SUPFAM" id="SSF81382">
    <property type="entry name" value="Skp1 dimerisation domain-like"/>
    <property type="match status" value="1"/>
</dbReference>
<proteinExistence type="evidence at protein level"/>